<name>DDX3_DROME</name>
<protein>
    <recommendedName>
        <fullName>ATP-dependent RNA helicase bel</fullName>
        <ecNumber>3.6.4.13</ecNumber>
    </recommendedName>
    <alternativeName>
        <fullName>Protein belle</fullName>
    </alternativeName>
</protein>
<comment type="function">
    <text evidence="6 7">ATP-dependent RNA helicase that is essential and required for cellular function, larval growth, and for male and female fertility. Also required for RNA interference (RNAi), double-stranded RNA induces potent and specific gene silencing, by acting downstream of dsRNA internalization. RNAi is mediated by the RNA-induced silencing complex (RISC), a sequence-specific, multicomponent nuclease that destroys or silences messenger RNAs homologous to the silencing trigger.</text>
</comment>
<comment type="catalytic activity">
    <reaction>
        <text>ATP + H2O = ADP + phosphate + H(+)</text>
        <dbReference type="Rhea" id="RHEA:13065"/>
        <dbReference type="ChEBI" id="CHEBI:15377"/>
        <dbReference type="ChEBI" id="CHEBI:15378"/>
        <dbReference type="ChEBI" id="CHEBI:30616"/>
        <dbReference type="ChEBI" id="CHEBI:43474"/>
        <dbReference type="ChEBI" id="CHEBI:456216"/>
        <dbReference type="EC" id="3.6.4.13"/>
    </reaction>
</comment>
<comment type="subcellular location">
    <subcellularLocation>
        <location evidence="6">Cytoplasm</location>
    </subcellularLocation>
    <text>In nurse cells, follicle cells, and within the oocyte. Vas and bel colocalize in the perinuclear region of nurse cells.</text>
</comment>
<comment type="tissue specificity">
    <text evidence="6">Vas and bel colocalize in nuage (perinuclear, electron-dense granules in germline cells) and at the oocyte posterior during oogenesis.</text>
</comment>
<comment type="developmental stage">
    <text evidence="6">Expressed throughout development, highest expression in second larval instar and adult females.</text>
</comment>
<comment type="disruption phenotype">
    <text evidence="6">Flies are recessive lethal with a larval growth defect phenotype. Hypomorphic bel mutants are male-sterile due to defects in spermatogenesis and female sterile as oogenesis usually arrests around stages 8-9 and egg chambers completely degenerate.</text>
</comment>
<comment type="similarity">
    <text evidence="1">Belongs to the DEAD box helicase family. DDX3/DED1 subfamily.</text>
</comment>
<feature type="chain" id="PRO_0000270580" description="ATP-dependent RNA helicase bel">
    <location>
        <begin position="1"/>
        <end position="798"/>
    </location>
</feature>
<feature type="domain" description="Helicase ATP-binding" evidence="2">
    <location>
        <begin position="326"/>
        <end position="515"/>
    </location>
</feature>
<feature type="domain" description="Helicase C-terminal" evidence="3">
    <location>
        <begin position="542"/>
        <end position="693"/>
    </location>
</feature>
<feature type="region of interest" description="Disordered" evidence="4">
    <location>
        <begin position="16"/>
        <end position="248"/>
    </location>
</feature>
<feature type="region of interest" description="Disordered" evidence="4">
    <location>
        <begin position="689"/>
        <end position="765"/>
    </location>
</feature>
<feature type="region of interest" description="Disordered" evidence="4">
    <location>
        <begin position="778"/>
        <end position="798"/>
    </location>
</feature>
<feature type="short sequence motif" description="Q motif" evidence="1">
    <location>
        <begin position="295"/>
        <end position="323"/>
    </location>
</feature>
<feature type="short sequence motif" description="DEAD box" evidence="1">
    <location>
        <begin position="459"/>
        <end position="462"/>
    </location>
</feature>
<feature type="compositionally biased region" description="Polar residues" evidence="4">
    <location>
        <begin position="31"/>
        <end position="42"/>
    </location>
</feature>
<feature type="compositionally biased region" description="Gly residues" evidence="4">
    <location>
        <begin position="94"/>
        <end position="110"/>
    </location>
</feature>
<feature type="compositionally biased region" description="Gly residues" evidence="4">
    <location>
        <begin position="118"/>
        <end position="132"/>
    </location>
</feature>
<feature type="compositionally biased region" description="Gly residues" evidence="4">
    <location>
        <begin position="154"/>
        <end position="178"/>
    </location>
</feature>
<feature type="compositionally biased region" description="Basic and acidic residues" evidence="4">
    <location>
        <begin position="198"/>
        <end position="209"/>
    </location>
</feature>
<feature type="compositionally biased region" description="Gly residues" evidence="4">
    <location>
        <begin position="706"/>
        <end position="717"/>
    </location>
</feature>
<feature type="compositionally biased region" description="Gly residues" evidence="4">
    <location>
        <begin position="740"/>
        <end position="750"/>
    </location>
</feature>
<feature type="binding site" evidence="2">
    <location>
        <begin position="315"/>
        <end position="322"/>
    </location>
    <ligand>
        <name>ATP</name>
        <dbReference type="ChEBI" id="CHEBI:30616"/>
    </ligand>
</feature>
<feature type="binding site" evidence="2">
    <location>
        <begin position="339"/>
        <end position="346"/>
    </location>
    <ligand>
        <name>ATP</name>
        <dbReference type="ChEBI" id="CHEBI:30616"/>
    </ligand>
</feature>
<feature type="modified residue" description="Phosphoserine" evidence="8">
    <location>
        <position position="177"/>
    </location>
</feature>
<feature type="modified residue" description="Phosphoserine" evidence="8">
    <location>
        <position position="179"/>
    </location>
</feature>
<feature type="modified residue" description="Phosphoserine" evidence="8">
    <location>
        <position position="214"/>
    </location>
</feature>
<feature type="modified residue" description="Phosphoserine" evidence="8">
    <location>
        <position position="219"/>
    </location>
</feature>
<feature type="modified residue" description="Phosphoserine" evidence="8">
    <location>
        <position position="638"/>
    </location>
</feature>
<feature type="sequence conflict" description="In Ref. 4; AAL90351." evidence="9" ref="4">
    <original>I</original>
    <variation>T</variation>
    <location>
        <position position="513"/>
    </location>
</feature>
<feature type="sequence conflict" description="In Ref. 4; AAL90351." evidence="9" ref="4">
    <original>G</original>
    <variation>S</variation>
    <location>
        <position position="709"/>
    </location>
</feature>
<sequence length="798" mass="85081">MSNAINQNGTGLEQQVAGLDLNGGSADYSGPITSKTSTNSVTGGVYVPPHLRGGGGNNNAADAESQGQGQGQGQGFDSRSGNPRQETRDPQQSRGGGGEYRRGGGGGGRGFNRQSGDYGYGSGGGGRRGGGGRFEDNYNGGEFDSRRGGDWNRSGGGGGGGRGFGRGPSYRGGGGGSGSNLNEQTAEDGQAQQQQQPRNDRWQEPERPAGFDGSEGGQSAGGNRSYNNRGERGGGGYNSRWKEGGGSNVDYTKLGARDERLEVELFGVGNTGINFDKYEDIPVEATGQNVPPNITSFDDVQLTEIIRNNVALARYDKPTPVQKHAIPIIINGRDLMACAQTGSGKTAAFLVPILNQMYELGHVPPPQSTRQYSRRKQYPLGLVLAPTRELATQIFEEAKKFAYRSRMRPAVLYGGNNTSEQMRELDRGCHLIVATPGRLEDMITRGKVGLENIRFLVLDEADRMLDMGFEPQIRRIVEQLNMPPTGQRQTLMFSATFPKQIQELASDFLSNYIFLAVGRVGSTSENITQTILWVYEPDKRSYLLDLLSSIRDGPEYTKDSLTLIFVETKKGADSLEEFLYQCNHPVTSIHGDRTQKEREEALRCFRSGDCPILVATAVAARGLDIPHVKHVINFDLPSDVEEYVHRIGRTGRMGNLGVATSFFNEKNRNICSDLLELLIETKQEIPSFMEDMSSDRGHGGAKRAGRGGGGRYGGGFGSRDYRQSSGGGGGGRSGPPPRSGGSGSGGGGGSYRSNGNSYGGNSGGGGYYGGGAGGGSYGGSYGGGSASHSSNAPDWWAQ</sequence>
<keyword id="KW-0067">ATP-binding</keyword>
<keyword id="KW-0963">Cytoplasm</keyword>
<keyword id="KW-0217">Developmental protein</keyword>
<keyword id="KW-0221">Differentiation</keyword>
<keyword id="KW-0347">Helicase</keyword>
<keyword id="KW-0378">Hydrolase</keyword>
<keyword id="KW-0547">Nucleotide-binding</keyword>
<keyword id="KW-0896">Oogenesis</keyword>
<keyword id="KW-0597">Phosphoprotein</keyword>
<keyword id="KW-1185">Reference proteome</keyword>
<keyword id="KW-0694">RNA-binding</keyword>
<keyword id="KW-0943">RNA-mediated gene silencing</keyword>
<keyword id="KW-0744">Spermatogenesis</keyword>
<organism>
    <name type="scientific">Drosophila melanogaster</name>
    <name type="common">Fruit fly</name>
    <dbReference type="NCBI Taxonomy" id="7227"/>
    <lineage>
        <taxon>Eukaryota</taxon>
        <taxon>Metazoa</taxon>
        <taxon>Ecdysozoa</taxon>
        <taxon>Arthropoda</taxon>
        <taxon>Hexapoda</taxon>
        <taxon>Insecta</taxon>
        <taxon>Pterygota</taxon>
        <taxon>Neoptera</taxon>
        <taxon>Endopterygota</taxon>
        <taxon>Diptera</taxon>
        <taxon>Brachycera</taxon>
        <taxon>Muscomorpha</taxon>
        <taxon>Ephydroidea</taxon>
        <taxon>Drosophilidae</taxon>
        <taxon>Drosophila</taxon>
        <taxon>Sophophora</taxon>
    </lineage>
</organism>
<accession>Q9VHP0</accession>
<accession>Q8SXI8</accession>
<dbReference type="EC" id="3.6.4.13"/>
<dbReference type="EMBL" id="AE014297">
    <property type="protein sequence ID" value="AAF54262.1"/>
    <property type="molecule type" value="Genomic_DNA"/>
</dbReference>
<dbReference type="EMBL" id="AY089613">
    <property type="protein sequence ID" value="AAL90351.1"/>
    <property type="molecule type" value="mRNA"/>
</dbReference>
<dbReference type="RefSeq" id="NP_536783.1">
    <property type="nucleotide sequence ID" value="NM_080522.4"/>
</dbReference>
<dbReference type="SMR" id="Q9VHP0"/>
<dbReference type="BioGRID" id="69908">
    <property type="interactions" value="28"/>
</dbReference>
<dbReference type="FunCoup" id="Q9VHP0">
    <property type="interactions" value="1607"/>
</dbReference>
<dbReference type="IntAct" id="Q9VHP0">
    <property type="interactions" value="27"/>
</dbReference>
<dbReference type="STRING" id="7227.FBpp0306433"/>
<dbReference type="iPTMnet" id="Q9VHP0"/>
<dbReference type="PaxDb" id="7227-FBpp0081374"/>
<dbReference type="ABCD" id="Q9VHP0">
    <property type="antibodies" value="2 sequenced antibodies"/>
</dbReference>
<dbReference type="EnsemblMetazoa" id="FBtr0081888">
    <property type="protein sequence ID" value="FBpp0081374"/>
    <property type="gene ID" value="FBgn0263231"/>
</dbReference>
<dbReference type="GeneID" id="45826"/>
<dbReference type="KEGG" id="dme:Dmel_CG9748"/>
<dbReference type="UCSC" id="CG9748-RA">
    <property type="organism name" value="d. melanogaster"/>
</dbReference>
<dbReference type="AGR" id="FB:FBgn0263231"/>
<dbReference type="CTD" id="100035747"/>
<dbReference type="FlyBase" id="FBgn0263231">
    <property type="gene designation" value="bel"/>
</dbReference>
<dbReference type="VEuPathDB" id="VectorBase:FBgn0263231"/>
<dbReference type="eggNOG" id="KOG0335">
    <property type="taxonomic scope" value="Eukaryota"/>
</dbReference>
<dbReference type="GeneTree" id="ENSGT00940000168275"/>
<dbReference type="HOGENOM" id="CLU_003041_16_3_1"/>
<dbReference type="InParanoid" id="Q9VHP0"/>
<dbReference type="OrthoDB" id="196131at2759"/>
<dbReference type="PhylomeDB" id="Q9VHP0"/>
<dbReference type="BRENDA" id="3.6.4.13">
    <property type="organism ID" value="1994"/>
</dbReference>
<dbReference type="Reactome" id="R-DME-6798695">
    <property type="pathway name" value="Neutrophil degranulation"/>
</dbReference>
<dbReference type="BioGRID-ORCS" id="45826">
    <property type="hits" value="1 hit in 3 CRISPR screens"/>
</dbReference>
<dbReference type="GenomeRNAi" id="45826"/>
<dbReference type="PRO" id="PR:Q9VHP0"/>
<dbReference type="Proteomes" id="UP000000803">
    <property type="component" value="Chromosome 3R"/>
</dbReference>
<dbReference type="Bgee" id="FBgn0263231">
    <property type="expression patterns" value="Expressed in spermatogonium in testis and 293 other cell types or tissues"/>
</dbReference>
<dbReference type="ExpressionAtlas" id="Q9VHP0">
    <property type="expression patterns" value="baseline and differential"/>
</dbReference>
<dbReference type="GO" id="GO:0005737">
    <property type="term" value="C:cytoplasm"/>
    <property type="evidence" value="ECO:0000314"/>
    <property type="project" value="FlyBase"/>
</dbReference>
<dbReference type="GO" id="GO:0005829">
    <property type="term" value="C:cytosol"/>
    <property type="evidence" value="ECO:0007005"/>
    <property type="project" value="FlyBase"/>
</dbReference>
<dbReference type="GO" id="GO:0005739">
    <property type="term" value="C:mitochondrion"/>
    <property type="evidence" value="ECO:0000250"/>
    <property type="project" value="FlyBase"/>
</dbReference>
<dbReference type="GO" id="GO:0043025">
    <property type="term" value="C:neuronal cell body"/>
    <property type="evidence" value="ECO:0000314"/>
    <property type="project" value="FlyBase"/>
</dbReference>
<dbReference type="GO" id="GO:0005634">
    <property type="term" value="C:nucleus"/>
    <property type="evidence" value="ECO:0000318"/>
    <property type="project" value="GO_Central"/>
</dbReference>
<dbReference type="GO" id="GO:0043186">
    <property type="term" value="C:P granule"/>
    <property type="evidence" value="ECO:0000314"/>
    <property type="project" value="UniProtKB"/>
</dbReference>
<dbReference type="GO" id="GO:0016442">
    <property type="term" value="C:RISC complex"/>
    <property type="evidence" value="ECO:0000314"/>
    <property type="project" value="UniProtKB"/>
</dbReference>
<dbReference type="GO" id="GO:0005524">
    <property type="term" value="F:ATP binding"/>
    <property type="evidence" value="ECO:0007669"/>
    <property type="project" value="UniProtKB-KW"/>
</dbReference>
<dbReference type="GO" id="GO:0016887">
    <property type="term" value="F:ATP hydrolysis activity"/>
    <property type="evidence" value="ECO:0007669"/>
    <property type="project" value="RHEA"/>
</dbReference>
<dbReference type="GO" id="GO:0003729">
    <property type="term" value="F:mRNA binding"/>
    <property type="evidence" value="ECO:0000318"/>
    <property type="project" value="GO_Central"/>
</dbReference>
<dbReference type="GO" id="GO:0003724">
    <property type="term" value="F:RNA helicase activity"/>
    <property type="evidence" value="ECO:0000315"/>
    <property type="project" value="UniProtKB"/>
</dbReference>
<dbReference type="GO" id="GO:0048102">
    <property type="term" value="P:autophagic cell death"/>
    <property type="evidence" value="ECO:0000315"/>
    <property type="project" value="FlyBase"/>
</dbReference>
<dbReference type="GO" id="GO:0030154">
    <property type="term" value="P:cell differentiation"/>
    <property type="evidence" value="ECO:0000318"/>
    <property type="project" value="GO_Central"/>
</dbReference>
<dbReference type="GO" id="GO:0007276">
    <property type="term" value="P:gamete generation"/>
    <property type="evidence" value="ECO:0000318"/>
    <property type="project" value="GO_Central"/>
</dbReference>
<dbReference type="GO" id="GO:0002168">
    <property type="term" value="P:instar larval development"/>
    <property type="evidence" value="ECO:0000315"/>
    <property type="project" value="FlyBase"/>
</dbReference>
<dbReference type="GO" id="GO:0036098">
    <property type="term" value="P:male germ-line stem cell population maintenance"/>
    <property type="evidence" value="ECO:0000315"/>
    <property type="project" value="FlyBase"/>
</dbReference>
<dbReference type="GO" id="GO:0000070">
    <property type="term" value="P:mitotic sister chromatid segregation"/>
    <property type="evidence" value="ECO:0000315"/>
    <property type="project" value="FlyBase"/>
</dbReference>
<dbReference type="GO" id="GO:0010629">
    <property type="term" value="P:negative regulation of gene expression"/>
    <property type="evidence" value="ECO:0000318"/>
    <property type="project" value="GO_Central"/>
</dbReference>
<dbReference type="GO" id="GO:0048477">
    <property type="term" value="P:oogenesis"/>
    <property type="evidence" value="ECO:0000315"/>
    <property type="project" value="FlyBase"/>
</dbReference>
<dbReference type="GO" id="GO:0070131">
    <property type="term" value="P:positive regulation of mitochondrial translation"/>
    <property type="evidence" value="ECO:0000250"/>
    <property type="project" value="FlyBase"/>
</dbReference>
<dbReference type="GO" id="GO:0010468">
    <property type="term" value="P:regulation of gene expression"/>
    <property type="evidence" value="ECO:0000315"/>
    <property type="project" value="FlyBase"/>
</dbReference>
<dbReference type="GO" id="GO:0035194">
    <property type="term" value="P:regulatory ncRNA-mediated post-transcriptional gene silencing"/>
    <property type="evidence" value="ECO:0000315"/>
    <property type="project" value="UniProtKB"/>
</dbReference>
<dbReference type="GO" id="GO:0035075">
    <property type="term" value="P:response to ecdysone"/>
    <property type="evidence" value="ECO:0000315"/>
    <property type="project" value="FlyBase"/>
</dbReference>
<dbReference type="GO" id="GO:0007283">
    <property type="term" value="P:spermatogenesis"/>
    <property type="evidence" value="ECO:0000315"/>
    <property type="project" value="FlyBase"/>
</dbReference>
<dbReference type="CDD" id="cd18051">
    <property type="entry name" value="DEADc_DDX3"/>
    <property type="match status" value="1"/>
</dbReference>
<dbReference type="CDD" id="cd18787">
    <property type="entry name" value="SF2_C_DEAD"/>
    <property type="match status" value="1"/>
</dbReference>
<dbReference type="FunFam" id="3.40.50.300:FF:000160">
    <property type="entry name" value="ATP-dependent RNA helicase DDX3X"/>
    <property type="match status" value="1"/>
</dbReference>
<dbReference type="FunFam" id="3.40.50.300:FF:000008">
    <property type="entry name" value="ATP-dependent RNA helicase RhlB"/>
    <property type="match status" value="1"/>
</dbReference>
<dbReference type="Gene3D" id="3.40.50.300">
    <property type="entry name" value="P-loop containing nucleotide triphosphate hydrolases"/>
    <property type="match status" value="2"/>
</dbReference>
<dbReference type="InterPro" id="IPR011545">
    <property type="entry name" value="DEAD/DEAH_box_helicase_dom"/>
</dbReference>
<dbReference type="InterPro" id="IPR014001">
    <property type="entry name" value="Helicase_ATP-bd"/>
</dbReference>
<dbReference type="InterPro" id="IPR001650">
    <property type="entry name" value="Helicase_C-like"/>
</dbReference>
<dbReference type="InterPro" id="IPR027417">
    <property type="entry name" value="P-loop_NTPase"/>
</dbReference>
<dbReference type="InterPro" id="IPR000629">
    <property type="entry name" value="RNA-helicase_DEAD-box_CS"/>
</dbReference>
<dbReference type="InterPro" id="IPR014014">
    <property type="entry name" value="RNA_helicase_DEAD_Q_motif"/>
</dbReference>
<dbReference type="PANTHER" id="PTHR47958">
    <property type="entry name" value="ATP-DEPENDENT RNA HELICASE DBP3"/>
    <property type="match status" value="1"/>
</dbReference>
<dbReference type="Pfam" id="PF00270">
    <property type="entry name" value="DEAD"/>
    <property type="match status" value="1"/>
</dbReference>
<dbReference type="Pfam" id="PF00271">
    <property type="entry name" value="Helicase_C"/>
    <property type="match status" value="1"/>
</dbReference>
<dbReference type="SMART" id="SM00487">
    <property type="entry name" value="DEXDc"/>
    <property type="match status" value="1"/>
</dbReference>
<dbReference type="SMART" id="SM00490">
    <property type="entry name" value="HELICc"/>
    <property type="match status" value="1"/>
</dbReference>
<dbReference type="SUPFAM" id="SSF52540">
    <property type="entry name" value="P-loop containing nucleoside triphosphate hydrolases"/>
    <property type="match status" value="1"/>
</dbReference>
<dbReference type="PROSITE" id="PS00039">
    <property type="entry name" value="DEAD_ATP_HELICASE"/>
    <property type="match status" value="1"/>
</dbReference>
<dbReference type="PROSITE" id="PS51192">
    <property type="entry name" value="HELICASE_ATP_BIND_1"/>
    <property type="match status" value="1"/>
</dbReference>
<dbReference type="PROSITE" id="PS51194">
    <property type="entry name" value="HELICASE_CTER"/>
    <property type="match status" value="1"/>
</dbReference>
<dbReference type="PROSITE" id="PS51195">
    <property type="entry name" value="Q_MOTIF"/>
    <property type="match status" value="1"/>
</dbReference>
<proteinExistence type="evidence at protein level"/>
<gene>
    <name evidence="10" type="primary">bel</name>
    <name type="ORF">CG9748</name>
</gene>
<evidence type="ECO:0000255" key="1"/>
<evidence type="ECO:0000255" key="2">
    <source>
        <dbReference type="PROSITE-ProRule" id="PRU00541"/>
    </source>
</evidence>
<evidence type="ECO:0000255" key="3">
    <source>
        <dbReference type="PROSITE-ProRule" id="PRU00542"/>
    </source>
</evidence>
<evidence type="ECO:0000256" key="4">
    <source>
        <dbReference type="SAM" id="MobiDB-lite"/>
    </source>
</evidence>
<evidence type="ECO:0000269" key="5">
    <source>
    </source>
</evidence>
<evidence type="ECO:0000269" key="6">
    <source>
    </source>
</evidence>
<evidence type="ECO:0000269" key="7">
    <source>
    </source>
</evidence>
<evidence type="ECO:0000269" key="8">
    <source>
    </source>
</evidence>
<evidence type="ECO:0000305" key="9"/>
<evidence type="ECO:0000312" key="10">
    <source>
        <dbReference type="EMBL" id="AAF54262.1"/>
    </source>
</evidence>
<evidence type="ECO:0000312" key="11">
    <source>
        <dbReference type="EMBL" id="AAL90351.1"/>
    </source>
</evidence>
<reference evidence="9" key="1">
    <citation type="journal article" date="2005" name="Dev. Biol.">
        <title>Belle is a Drosophila DEAD-box protein required for viability and in the germ line.</title>
        <authorList>
            <person name="Johnstone O."/>
            <person name="Deuring R."/>
            <person name="Bock R."/>
            <person name="Linder P."/>
            <person name="Fuller M.T."/>
            <person name="Lasko P."/>
        </authorList>
    </citation>
    <scope>NUCLEOTIDE SEQUENCE [MRNA]</scope>
    <scope>FUNCTION</scope>
    <scope>SUBCELLULAR LOCATION</scope>
    <scope>TISSUE SPECIFICITY</scope>
    <scope>DEVELOPMENTAL STAGE</scope>
    <scope>DISRUPTION PHENOTYPE</scope>
</reference>
<reference evidence="10" key="2">
    <citation type="journal article" date="2000" name="Science">
        <title>The genome sequence of Drosophila melanogaster.</title>
        <authorList>
            <person name="Adams M.D."/>
            <person name="Celniker S.E."/>
            <person name="Holt R.A."/>
            <person name="Evans C.A."/>
            <person name="Gocayne J.D."/>
            <person name="Amanatides P.G."/>
            <person name="Scherer S.E."/>
            <person name="Li P.W."/>
            <person name="Hoskins R.A."/>
            <person name="Galle R.F."/>
            <person name="George R.A."/>
            <person name="Lewis S.E."/>
            <person name="Richards S."/>
            <person name="Ashburner M."/>
            <person name="Henderson S.N."/>
            <person name="Sutton G.G."/>
            <person name="Wortman J.R."/>
            <person name="Yandell M.D."/>
            <person name="Zhang Q."/>
            <person name="Chen L.X."/>
            <person name="Brandon R.C."/>
            <person name="Rogers Y.-H.C."/>
            <person name="Blazej R.G."/>
            <person name="Champe M."/>
            <person name="Pfeiffer B.D."/>
            <person name="Wan K.H."/>
            <person name="Doyle C."/>
            <person name="Baxter E.G."/>
            <person name="Helt G."/>
            <person name="Nelson C.R."/>
            <person name="Miklos G.L.G."/>
            <person name="Abril J.F."/>
            <person name="Agbayani A."/>
            <person name="An H.-J."/>
            <person name="Andrews-Pfannkoch C."/>
            <person name="Baldwin D."/>
            <person name="Ballew R.M."/>
            <person name="Basu A."/>
            <person name="Baxendale J."/>
            <person name="Bayraktaroglu L."/>
            <person name="Beasley E.M."/>
            <person name="Beeson K.Y."/>
            <person name="Benos P.V."/>
            <person name="Berman B.P."/>
            <person name="Bhandari D."/>
            <person name="Bolshakov S."/>
            <person name="Borkova D."/>
            <person name="Botchan M.R."/>
            <person name="Bouck J."/>
            <person name="Brokstein P."/>
            <person name="Brottier P."/>
            <person name="Burtis K.C."/>
            <person name="Busam D.A."/>
            <person name="Butler H."/>
            <person name="Cadieu E."/>
            <person name="Center A."/>
            <person name="Chandra I."/>
            <person name="Cherry J.M."/>
            <person name="Cawley S."/>
            <person name="Dahlke C."/>
            <person name="Davenport L.B."/>
            <person name="Davies P."/>
            <person name="de Pablos B."/>
            <person name="Delcher A."/>
            <person name="Deng Z."/>
            <person name="Mays A.D."/>
            <person name="Dew I."/>
            <person name="Dietz S.M."/>
            <person name="Dodson K."/>
            <person name="Doup L.E."/>
            <person name="Downes M."/>
            <person name="Dugan-Rocha S."/>
            <person name="Dunkov B.C."/>
            <person name="Dunn P."/>
            <person name="Durbin K.J."/>
            <person name="Evangelista C.C."/>
            <person name="Ferraz C."/>
            <person name="Ferriera S."/>
            <person name="Fleischmann W."/>
            <person name="Fosler C."/>
            <person name="Gabrielian A.E."/>
            <person name="Garg N.S."/>
            <person name="Gelbart W.M."/>
            <person name="Glasser K."/>
            <person name="Glodek A."/>
            <person name="Gong F."/>
            <person name="Gorrell J.H."/>
            <person name="Gu Z."/>
            <person name="Guan P."/>
            <person name="Harris M."/>
            <person name="Harris N.L."/>
            <person name="Harvey D.A."/>
            <person name="Heiman T.J."/>
            <person name="Hernandez J.R."/>
            <person name="Houck J."/>
            <person name="Hostin D."/>
            <person name="Houston K.A."/>
            <person name="Howland T.J."/>
            <person name="Wei M.-H."/>
            <person name="Ibegwam C."/>
            <person name="Jalali M."/>
            <person name="Kalush F."/>
            <person name="Karpen G.H."/>
            <person name="Ke Z."/>
            <person name="Kennison J.A."/>
            <person name="Ketchum K.A."/>
            <person name="Kimmel B.E."/>
            <person name="Kodira C.D."/>
            <person name="Kraft C.L."/>
            <person name="Kravitz S."/>
            <person name="Kulp D."/>
            <person name="Lai Z."/>
            <person name="Lasko P."/>
            <person name="Lei Y."/>
            <person name="Levitsky A.A."/>
            <person name="Li J.H."/>
            <person name="Li Z."/>
            <person name="Liang Y."/>
            <person name="Lin X."/>
            <person name="Liu X."/>
            <person name="Mattei B."/>
            <person name="McIntosh T.C."/>
            <person name="McLeod M.P."/>
            <person name="McPherson D."/>
            <person name="Merkulov G."/>
            <person name="Milshina N.V."/>
            <person name="Mobarry C."/>
            <person name="Morris J."/>
            <person name="Moshrefi A."/>
            <person name="Mount S.M."/>
            <person name="Moy M."/>
            <person name="Murphy B."/>
            <person name="Murphy L."/>
            <person name="Muzny D.M."/>
            <person name="Nelson D.L."/>
            <person name="Nelson D.R."/>
            <person name="Nelson K.A."/>
            <person name="Nixon K."/>
            <person name="Nusskern D.R."/>
            <person name="Pacleb J.M."/>
            <person name="Palazzolo M."/>
            <person name="Pittman G.S."/>
            <person name="Pan S."/>
            <person name="Pollard J."/>
            <person name="Puri V."/>
            <person name="Reese M.G."/>
            <person name="Reinert K."/>
            <person name="Remington K."/>
            <person name="Saunders R.D.C."/>
            <person name="Scheeler F."/>
            <person name="Shen H."/>
            <person name="Shue B.C."/>
            <person name="Siden-Kiamos I."/>
            <person name="Simpson M."/>
            <person name="Skupski M.P."/>
            <person name="Smith T.J."/>
            <person name="Spier E."/>
            <person name="Spradling A.C."/>
            <person name="Stapleton M."/>
            <person name="Strong R."/>
            <person name="Sun E."/>
            <person name="Svirskas R."/>
            <person name="Tector C."/>
            <person name="Turner R."/>
            <person name="Venter E."/>
            <person name="Wang A.H."/>
            <person name="Wang X."/>
            <person name="Wang Z.-Y."/>
            <person name="Wassarman D.A."/>
            <person name="Weinstock G.M."/>
            <person name="Weissenbach J."/>
            <person name="Williams S.M."/>
            <person name="Woodage T."/>
            <person name="Worley K.C."/>
            <person name="Wu D."/>
            <person name="Yang S."/>
            <person name="Yao Q.A."/>
            <person name="Ye J."/>
            <person name="Yeh R.-F."/>
            <person name="Zaveri J.S."/>
            <person name="Zhan M."/>
            <person name="Zhang G."/>
            <person name="Zhao Q."/>
            <person name="Zheng L."/>
            <person name="Zheng X.H."/>
            <person name="Zhong F.N."/>
            <person name="Zhong W."/>
            <person name="Zhou X."/>
            <person name="Zhu S.C."/>
            <person name="Zhu X."/>
            <person name="Smith H.O."/>
            <person name="Gibbs R.A."/>
            <person name="Myers E.W."/>
            <person name="Rubin G.M."/>
            <person name="Venter J.C."/>
        </authorList>
    </citation>
    <scope>NUCLEOTIDE SEQUENCE [LARGE SCALE GENOMIC DNA]</scope>
    <source>
        <strain evidence="10">Berkeley</strain>
    </source>
</reference>
<reference evidence="9 10" key="3">
    <citation type="journal article" date="2002" name="Genome Biol.">
        <title>Annotation of the Drosophila melanogaster euchromatic genome: a systematic review.</title>
        <authorList>
            <person name="Misra S."/>
            <person name="Crosby M.A."/>
            <person name="Mungall C.J."/>
            <person name="Matthews B.B."/>
            <person name="Campbell K.S."/>
            <person name="Hradecky P."/>
            <person name="Huang Y."/>
            <person name="Kaminker J.S."/>
            <person name="Millburn G.H."/>
            <person name="Prochnik S.E."/>
            <person name="Smith C.D."/>
            <person name="Tupy J.L."/>
            <person name="Whitfield E.J."/>
            <person name="Bayraktaroglu L."/>
            <person name="Berman B.P."/>
            <person name="Bettencourt B.R."/>
            <person name="Celniker S.E."/>
            <person name="de Grey A.D.N.J."/>
            <person name="Drysdale R.A."/>
            <person name="Harris N.L."/>
            <person name="Richter J."/>
            <person name="Russo S."/>
            <person name="Schroeder A.J."/>
            <person name="Shu S.Q."/>
            <person name="Stapleton M."/>
            <person name="Yamada C."/>
            <person name="Ashburner M."/>
            <person name="Gelbart W.M."/>
            <person name="Rubin G.M."/>
            <person name="Lewis S.E."/>
        </authorList>
    </citation>
    <scope>GENOME REANNOTATION</scope>
    <source>
        <strain>Berkeley</strain>
    </source>
</reference>
<reference evidence="9 11" key="4">
    <citation type="journal article" date="2002" name="Genome Biol.">
        <title>A Drosophila full-length cDNA resource.</title>
        <authorList>
            <person name="Stapleton M."/>
            <person name="Carlson J.W."/>
            <person name="Brokstein P."/>
            <person name="Yu C."/>
            <person name="Champe M."/>
            <person name="George R.A."/>
            <person name="Guarin H."/>
            <person name="Kronmiller B."/>
            <person name="Pacleb J.M."/>
            <person name="Park S."/>
            <person name="Wan K.H."/>
            <person name="Rubin G.M."/>
            <person name="Celniker S.E."/>
        </authorList>
    </citation>
    <scope>NUCLEOTIDE SEQUENCE [LARGE SCALE MRNA]</scope>
    <source>
        <strain evidence="11">Berkeley</strain>
        <tissue evidence="5">Embryo</tissue>
    </source>
</reference>
<reference evidence="9" key="5">
    <citation type="journal article" date="2006" name="J. Biol. Chem.">
        <title>Double-stranded RNA is internalized by scavenger receptor-mediated endocytosis in Drosophila S2 cells.</title>
        <authorList>
            <person name="Ulvila J."/>
            <person name="Parikka M."/>
            <person name="Kleino A."/>
            <person name="Sormunen R."/>
            <person name="Ezekowitz R.A."/>
            <person name="Kocks C."/>
            <person name="Ramet M."/>
        </authorList>
    </citation>
    <scope>FUNCTION</scope>
</reference>
<reference key="6">
    <citation type="journal article" date="2008" name="J. Proteome Res.">
        <title>Phosphoproteome analysis of Drosophila melanogaster embryos.</title>
        <authorList>
            <person name="Zhai B."/>
            <person name="Villen J."/>
            <person name="Beausoleil S.A."/>
            <person name="Mintseris J."/>
            <person name="Gygi S.P."/>
        </authorList>
    </citation>
    <scope>PHOSPHORYLATION [LARGE SCALE ANALYSIS] AT SER-177; SER-179; SER-214; SER-219 AND SER-638</scope>
    <scope>IDENTIFICATION BY MASS SPECTROMETRY</scope>
    <source>
        <tissue>Embryo</tissue>
    </source>
</reference>